<comment type="function">
    <text evidence="1">Functions in the N-end rule pathway of protein degradation where it conjugates Leu from its aminoacyl-tRNA to the N-termini of proteins containing an N-terminal aspartate or glutamate.</text>
</comment>
<comment type="catalytic activity">
    <reaction evidence="1">
        <text>N-terminal L-glutamyl-[protein] + L-leucyl-tRNA(Leu) = N-terminal L-leucyl-L-glutamyl-[protein] + tRNA(Leu) + H(+)</text>
        <dbReference type="Rhea" id="RHEA:50412"/>
        <dbReference type="Rhea" id="RHEA-COMP:9613"/>
        <dbReference type="Rhea" id="RHEA-COMP:9622"/>
        <dbReference type="Rhea" id="RHEA-COMP:12664"/>
        <dbReference type="Rhea" id="RHEA-COMP:12668"/>
        <dbReference type="ChEBI" id="CHEBI:15378"/>
        <dbReference type="ChEBI" id="CHEBI:64721"/>
        <dbReference type="ChEBI" id="CHEBI:78442"/>
        <dbReference type="ChEBI" id="CHEBI:78494"/>
        <dbReference type="ChEBI" id="CHEBI:133041"/>
        <dbReference type="EC" id="2.3.2.29"/>
    </reaction>
</comment>
<comment type="catalytic activity">
    <reaction evidence="1">
        <text>N-terminal L-aspartyl-[protein] + L-leucyl-tRNA(Leu) = N-terminal L-leucyl-L-aspartyl-[protein] + tRNA(Leu) + H(+)</text>
        <dbReference type="Rhea" id="RHEA:50420"/>
        <dbReference type="Rhea" id="RHEA-COMP:9613"/>
        <dbReference type="Rhea" id="RHEA-COMP:9622"/>
        <dbReference type="Rhea" id="RHEA-COMP:12669"/>
        <dbReference type="Rhea" id="RHEA-COMP:12674"/>
        <dbReference type="ChEBI" id="CHEBI:15378"/>
        <dbReference type="ChEBI" id="CHEBI:64720"/>
        <dbReference type="ChEBI" id="CHEBI:78442"/>
        <dbReference type="ChEBI" id="CHEBI:78494"/>
        <dbReference type="ChEBI" id="CHEBI:133042"/>
        <dbReference type="EC" id="2.3.2.29"/>
    </reaction>
</comment>
<comment type="subcellular location">
    <subcellularLocation>
        <location evidence="1">Cytoplasm</location>
    </subcellularLocation>
</comment>
<comment type="similarity">
    <text evidence="1">Belongs to the R-transferase family. Bpt subfamily.</text>
</comment>
<reference key="1">
    <citation type="journal article" date="2010" name="J. Bacteriol.">
        <title>The genetic basis of laboratory adaptation in Caulobacter crescentus.</title>
        <authorList>
            <person name="Marks M.E."/>
            <person name="Castro-Rojas C.M."/>
            <person name="Teiling C."/>
            <person name="Du L."/>
            <person name="Kapatral V."/>
            <person name="Walunas T.L."/>
            <person name="Crosson S."/>
        </authorList>
    </citation>
    <scope>NUCLEOTIDE SEQUENCE [LARGE SCALE GENOMIC DNA]</scope>
    <source>
        <strain>NA1000 / CB15N</strain>
    </source>
</reference>
<feature type="chain" id="PRO_1000147802" description="Aspartate/glutamate leucyltransferase">
    <location>
        <begin position="1"/>
        <end position="279"/>
    </location>
</feature>
<feature type="region of interest" description="Disordered" evidence="2">
    <location>
        <begin position="245"/>
        <end position="279"/>
    </location>
</feature>
<protein>
    <recommendedName>
        <fullName evidence="1">Aspartate/glutamate leucyltransferase</fullName>
        <ecNumber evidence="1">2.3.2.29</ecNumber>
    </recommendedName>
</protein>
<name>BPT_CAUVN</name>
<evidence type="ECO:0000255" key="1">
    <source>
        <dbReference type="HAMAP-Rule" id="MF_00689"/>
    </source>
</evidence>
<evidence type="ECO:0000256" key="2">
    <source>
        <dbReference type="SAM" id="MobiDB-lite"/>
    </source>
</evidence>
<sequence>MTQHFPTRQLRFFLTAPTPCPYLPGREERKVFAHLPLSDGPIVNDSLTQVGFRRSQNIAYRPACETCRACQSARAPATEYILSRSERKILGRNDDLERHLVEAEATLEQFELLRRYLLTRHADGGMAEMTWPDYVAMVEDTAVRTHLIEYRRKSLDRGPGDLVACVLVDVLADGLSLVYSFYEPDQPRRSLGSFIILDHIVQAQQNALPYVYLGYWVPGSEKMAYKARFSPLEILKPGGWSLMSARERGARPPRGPGALKDACDLPLSDAQPADIEDLD</sequence>
<dbReference type="EC" id="2.3.2.29" evidence="1"/>
<dbReference type="EMBL" id="CP001340">
    <property type="protein sequence ID" value="ACL95108.1"/>
    <property type="molecule type" value="Genomic_DNA"/>
</dbReference>
<dbReference type="RefSeq" id="WP_010919446.1">
    <property type="nucleotide sequence ID" value="NC_011916.1"/>
</dbReference>
<dbReference type="RefSeq" id="YP_002517016.1">
    <property type="nucleotide sequence ID" value="NC_011916.1"/>
</dbReference>
<dbReference type="SMR" id="B8GVD8"/>
<dbReference type="GeneID" id="7331702"/>
<dbReference type="KEGG" id="ccs:CCNA_01643"/>
<dbReference type="PATRIC" id="fig|565050.3.peg.1619"/>
<dbReference type="HOGENOM" id="CLU_077607_1_0_5"/>
<dbReference type="OrthoDB" id="9782022at2"/>
<dbReference type="PhylomeDB" id="B8GVD8"/>
<dbReference type="Proteomes" id="UP000001364">
    <property type="component" value="Chromosome"/>
</dbReference>
<dbReference type="GO" id="GO:0005737">
    <property type="term" value="C:cytoplasm"/>
    <property type="evidence" value="ECO:0007669"/>
    <property type="project" value="UniProtKB-SubCell"/>
</dbReference>
<dbReference type="GO" id="GO:0004057">
    <property type="term" value="F:arginyl-tRNA--protein transferase activity"/>
    <property type="evidence" value="ECO:0007669"/>
    <property type="project" value="InterPro"/>
</dbReference>
<dbReference type="GO" id="GO:0008914">
    <property type="term" value="F:leucyl-tRNA--protein transferase activity"/>
    <property type="evidence" value="ECO:0007669"/>
    <property type="project" value="UniProtKB-UniRule"/>
</dbReference>
<dbReference type="GO" id="GO:0071596">
    <property type="term" value="P:ubiquitin-dependent protein catabolic process via the N-end rule pathway"/>
    <property type="evidence" value="ECO:0007669"/>
    <property type="project" value="InterPro"/>
</dbReference>
<dbReference type="HAMAP" id="MF_00689">
    <property type="entry name" value="Bpt"/>
    <property type="match status" value="1"/>
</dbReference>
<dbReference type="InterPro" id="IPR016181">
    <property type="entry name" value="Acyl_CoA_acyltransferase"/>
</dbReference>
<dbReference type="InterPro" id="IPR017138">
    <property type="entry name" value="Asp_Glu_LeuTrfase"/>
</dbReference>
<dbReference type="InterPro" id="IPR030700">
    <property type="entry name" value="N-end_Aminoacyl_Trfase"/>
</dbReference>
<dbReference type="InterPro" id="IPR007472">
    <property type="entry name" value="N-end_Aminoacyl_Trfase_C"/>
</dbReference>
<dbReference type="InterPro" id="IPR007471">
    <property type="entry name" value="N-end_Aminoacyl_Trfase_N"/>
</dbReference>
<dbReference type="NCBIfam" id="NF002342">
    <property type="entry name" value="PRK01305.1-3"/>
    <property type="match status" value="1"/>
</dbReference>
<dbReference type="NCBIfam" id="NF002343">
    <property type="entry name" value="PRK01305.1-4"/>
    <property type="match status" value="1"/>
</dbReference>
<dbReference type="NCBIfam" id="NF002346">
    <property type="entry name" value="PRK01305.2-3"/>
    <property type="match status" value="1"/>
</dbReference>
<dbReference type="PANTHER" id="PTHR21367">
    <property type="entry name" value="ARGININE-TRNA-PROTEIN TRANSFERASE 1"/>
    <property type="match status" value="1"/>
</dbReference>
<dbReference type="PANTHER" id="PTHR21367:SF1">
    <property type="entry name" value="ARGINYL-TRNA--PROTEIN TRANSFERASE 1"/>
    <property type="match status" value="1"/>
</dbReference>
<dbReference type="Pfam" id="PF04377">
    <property type="entry name" value="ATE_C"/>
    <property type="match status" value="1"/>
</dbReference>
<dbReference type="Pfam" id="PF04376">
    <property type="entry name" value="ATE_N"/>
    <property type="match status" value="1"/>
</dbReference>
<dbReference type="PIRSF" id="PIRSF037208">
    <property type="entry name" value="ATE_pro_prd"/>
    <property type="match status" value="1"/>
</dbReference>
<dbReference type="SUPFAM" id="SSF55729">
    <property type="entry name" value="Acyl-CoA N-acyltransferases (Nat)"/>
    <property type="match status" value="1"/>
</dbReference>
<organism>
    <name type="scientific">Caulobacter vibrioides (strain NA1000 / CB15N)</name>
    <name type="common">Caulobacter crescentus</name>
    <dbReference type="NCBI Taxonomy" id="565050"/>
    <lineage>
        <taxon>Bacteria</taxon>
        <taxon>Pseudomonadati</taxon>
        <taxon>Pseudomonadota</taxon>
        <taxon>Alphaproteobacteria</taxon>
        <taxon>Caulobacterales</taxon>
        <taxon>Caulobacteraceae</taxon>
        <taxon>Caulobacter</taxon>
    </lineage>
</organism>
<gene>
    <name evidence="1" type="primary">bpt</name>
    <name type="ordered locus">CCNA_01643</name>
</gene>
<proteinExistence type="inferred from homology"/>
<keyword id="KW-0012">Acyltransferase</keyword>
<keyword id="KW-0963">Cytoplasm</keyword>
<keyword id="KW-1185">Reference proteome</keyword>
<keyword id="KW-0808">Transferase</keyword>
<accession>B8GVD8</accession>